<proteinExistence type="inferred from homology"/>
<sequence>MATINQLVRKPRKRKVAKSDVPALQACPQRRGVCTRVYTTTPKKPNSALRKVCRVRLTNGYEVSSYIGGEGHNLQEHSVVLIRGGRVKDLPGVRYHTVRGTLDTQGVQNRKQGRSKYGAKRPKS</sequence>
<accession>A1TYJ2</accession>
<reference key="1">
    <citation type="journal article" date="2011" name="Appl. Environ. Microbiol.">
        <title>Genomic potential of Marinobacter aquaeolei, a biogeochemical 'opportunitroph'.</title>
        <authorList>
            <person name="Singer E."/>
            <person name="Webb E.A."/>
            <person name="Nelson W.C."/>
            <person name="Heidelberg J.F."/>
            <person name="Ivanova N."/>
            <person name="Pati A."/>
            <person name="Edwards K.J."/>
        </authorList>
    </citation>
    <scope>NUCLEOTIDE SEQUENCE [LARGE SCALE GENOMIC DNA]</scope>
    <source>
        <strain>ATCC 700491 / DSM 11845 / VT8</strain>
    </source>
</reference>
<keyword id="KW-0488">Methylation</keyword>
<keyword id="KW-0687">Ribonucleoprotein</keyword>
<keyword id="KW-0689">Ribosomal protein</keyword>
<keyword id="KW-0694">RNA-binding</keyword>
<keyword id="KW-0699">rRNA-binding</keyword>
<keyword id="KW-0820">tRNA-binding</keyword>
<dbReference type="EMBL" id="CP000514">
    <property type="protein sequence ID" value="ABM17811.1"/>
    <property type="molecule type" value="Genomic_DNA"/>
</dbReference>
<dbReference type="RefSeq" id="WP_008174844.1">
    <property type="nucleotide sequence ID" value="NC_008740.1"/>
</dbReference>
<dbReference type="SMR" id="A1TYJ2"/>
<dbReference type="STRING" id="351348.Maqu_0714"/>
<dbReference type="GeneID" id="31820089"/>
<dbReference type="KEGG" id="maq:Maqu_0714"/>
<dbReference type="eggNOG" id="COG0048">
    <property type="taxonomic scope" value="Bacteria"/>
</dbReference>
<dbReference type="HOGENOM" id="CLU_104295_1_2_6"/>
<dbReference type="OrthoDB" id="9802366at2"/>
<dbReference type="Proteomes" id="UP000000998">
    <property type="component" value="Chromosome"/>
</dbReference>
<dbReference type="GO" id="GO:0015935">
    <property type="term" value="C:small ribosomal subunit"/>
    <property type="evidence" value="ECO:0007669"/>
    <property type="project" value="InterPro"/>
</dbReference>
<dbReference type="GO" id="GO:0019843">
    <property type="term" value="F:rRNA binding"/>
    <property type="evidence" value="ECO:0007669"/>
    <property type="project" value="UniProtKB-UniRule"/>
</dbReference>
<dbReference type="GO" id="GO:0003735">
    <property type="term" value="F:structural constituent of ribosome"/>
    <property type="evidence" value="ECO:0007669"/>
    <property type="project" value="InterPro"/>
</dbReference>
<dbReference type="GO" id="GO:0000049">
    <property type="term" value="F:tRNA binding"/>
    <property type="evidence" value="ECO:0007669"/>
    <property type="project" value="UniProtKB-UniRule"/>
</dbReference>
<dbReference type="GO" id="GO:0006412">
    <property type="term" value="P:translation"/>
    <property type="evidence" value="ECO:0007669"/>
    <property type="project" value="UniProtKB-UniRule"/>
</dbReference>
<dbReference type="CDD" id="cd03368">
    <property type="entry name" value="Ribosomal_S12"/>
    <property type="match status" value="1"/>
</dbReference>
<dbReference type="FunFam" id="2.40.50.140:FF:000001">
    <property type="entry name" value="30S ribosomal protein S12"/>
    <property type="match status" value="1"/>
</dbReference>
<dbReference type="Gene3D" id="2.40.50.140">
    <property type="entry name" value="Nucleic acid-binding proteins"/>
    <property type="match status" value="1"/>
</dbReference>
<dbReference type="HAMAP" id="MF_00403_B">
    <property type="entry name" value="Ribosomal_uS12_B"/>
    <property type="match status" value="1"/>
</dbReference>
<dbReference type="InterPro" id="IPR012340">
    <property type="entry name" value="NA-bd_OB-fold"/>
</dbReference>
<dbReference type="InterPro" id="IPR006032">
    <property type="entry name" value="Ribosomal_uS12"/>
</dbReference>
<dbReference type="InterPro" id="IPR005679">
    <property type="entry name" value="Ribosomal_uS12_bac"/>
</dbReference>
<dbReference type="NCBIfam" id="TIGR00981">
    <property type="entry name" value="rpsL_bact"/>
    <property type="match status" value="1"/>
</dbReference>
<dbReference type="PANTHER" id="PTHR11652">
    <property type="entry name" value="30S RIBOSOMAL PROTEIN S12 FAMILY MEMBER"/>
    <property type="match status" value="1"/>
</dbReference>
<dbReference type="Pfam" id="PF00164">
    <property type="entry name" value="Ribosom_S12_S23"/>
    <property type="match status" value="1"/>
</dbReference>
<dbReference type="PIRSF" id="PIRSF002133">
    <property type="entry name" value="Ribosomal_S12/S23"/>
    <property type="match status" value="1"/>
</dbReference>
<dbReference type="PRINTS" id="PR01034">
    <property type="entry name" value="RIBOSOMALS12"/>
</dbReference>
<dbReference type="SUPFAM" id="SSF50249">
    <property type="entry name" value="Nucleic acid-binding proteins"/>
    <property type="match status" value="1"/>
</dbReference>
<dbReference type="PROSITE" id="PS00055">
    <property type="entry name" value="RIBOSOMAL_S12"/>
    <property type="match status" value="1"/>
</dbReference>
<protein>
    <recommendedName>
        <fullName evidence="2">Small ribosomal subunit protein uS12</fullName>
    </recommendedName>
    <alternativeName>
        <fullName evidence="4">30S ribosomal protein S12</fullName>
    </alternativeName>
</protein>
<comment type="function">
    <text evidence="2">With S4 and S5 plays an important role in translational accuracy.</text>
</comment>
<comment type="function">
    <text evidence="2">Interacts with and stabilizes bases of the 16S rRNA that are involved in tRNA selection in the A site and with the mRNA backbone. Located at the interface of the 30S and 50S subunits, it traverses the body of the 30S subunit contacting proteins on the other side and probably holding the rRNA structure together. The combined cluster of proteins S8, S12 and S17 appears to hold together the shoulder and platform of the 30S subunit.</text>
</comment>
<comment type="subunit">
    <text evidence="2">Part of the 30S ribosomal subunit. Contacts proteins S8 and S17. May interact with IF1 in the 30S initiation complex.</text>
</comment>
<comment type="similarity">
    <text evidence="2">Belongs to the universal ribosomal protein uS12 family.</text>
</comment>
<name>RS12_MARN8</name>
<feature type="chain" id="PRO_0000295997" description="Small ribosomal subunit protein uS12">
    <location>
        <begin position="1"/>
        <end position="124"/>
    </location>
</feature>
<feature type="region of interest" description="Disordered" evidence="3">
    <location>
        <begin position="1"/>
        <end position="22"/>
    </location>
</feature>
<feature type="region of interest" description="Disordered" evidence="3">
    <location>
        <begin position="101"/>
        <end position="124"/>
    </location>
</feature>
<feature type="compositionally biased region" description="Basic residues" evidence="3">
    <location>
        <begin position="111"/>
        <end position="124"/>
    </location>
</feature>
<feature type="modified residue" description="3-methylthioaspartic acid" evidence="1">
    <location>
        <position position="89"/>
    </location>
</feature>
<organism>
    <name type="scientific">Marinobacter nauticus (strain ATCC 700491 / DSM 11845 / VT8)</name>
    <name type="common">Marinobacter aquaeolei</name>
    <dbReference type="NCBI Taxonomy" id="351348"/>
    <lineage>
        <taxon>Bacteria</taxon>
        <taxon>Pseudomonadati</taxon>
        <taxon>Pseudomonadota</taxon>
        <taxon>Gammaproteobacteria</taxon>
        <taxon>Pseudomonadales</taxon>
        <taxon>Marinobacteraceae</taxon>
        <taxon>Marinobacter</taxon>
    </lineage>
</organism>
<evidence type="ECO:0000250" key="1"/>
<evidence type="ECO:0000255" key="2">
    <source>
        <dbReference type="HAMAP-Rule" id="MF_00403"/>
    </source>
</evidence>
<evidence type="ECO:0000256" key="3">
    <source>
        <dbReference type="SAM" id="MobiDB-lite"/>
    </source>
</evidence>
<evidence type="ECO:0000305" key="4"/>
<gene>
    <name evidence="2" type="primary">rpsL</name>
    <name type="ordered locus">Maqu_0714</name>
</gene>